<name>NGB_RAT</name>
<feature type="chain" id="PRO_0000053396" description="Neuroglobin">
    <location>
        <begin position="1"/>
        <end position="151"/>
    </location>
</feature>
<feature type="domain" description="Globin" evidence="3">
    <location>
        <begin position="1"/>
        <end position="149"/>
    </location>
</feature>
<feature type="binding site" description="distal binding residue; reversible" evidence="2 3">
    <location>
        <position position="64"/>
    </location>
    <ligand>
        <name>heme b</name>
        <dbReference type="ChEBI" id="CHEBI:60344"/>
    </ligand>
    <ligandPart>
        <name>Fe</name>
        <dbReference type="ChEBI" id="CHEBI:18248"/>
    </ligandPart>
</feature>
<feature type="binding site" description="proximal binding residue" evidence="2 3">
    <location>
        <position position="96"/>
    </location>
    <ligand>
        <name>heme b</name>
        <dbReference type="ChEBI" id="CHEBI:60344"/>
    </ligand>
    <ligandPart>
        <name>Fe</name>
        <dbReference type="ChEBI" id="CHEBI:18248"/>
    </ligandPart>
</feature>
<feature type="sequence conflict" description="In Ref. 4; AAL47568." evidence="6" ref="4">
    <original>P</original>
    <variation>L</variation>
    <location>
        <position position="4"/>
    </location>
</feature>
<comment type="function">
    <text evidence="2">Monomeric globin with a bis-histidyl six-coordinate heme-iron atom through which it can bind dioxygen, carbon monoxide and nitric oxide. Could help transport oxygen and increase its availability to the metabolically active neuronal tissues, though its low quantity in tissues as well as its high affinity for dioxygen, which may limit its oxygen-releasing ability, argue against it. The ferrous/deoxygenated form exhibits a nitrite reductase activity and it could produce nitric oxide which in turn inhibits cellular respiration in response to hypoxia. In its ferrous/deoxygenated state, it may also exhibit GDI (Guanine nucleotide Dissociation Inhibitor) activity toward heterotrimeric G-alpha proteins, thereby regulating signal transduction to facilitate neuroprotective responses in the wake of hypoxia and associated oxidative stress.</text>
</comment>
<comment type="catalytic activity">
    <reaction evidence="2">
        <text>Fe(III)-heme b-[protein] + nitric oxide + H2O = Fe(II)-heme b-[protein] + nitrite + 2 H(+)</text>
        <dbReference type="Rhea" id="RHEA:77711"/>
        <dbReference type="Rhea" id="RHEA-COMP:18975"/>
        <dbReference type="Rhea" id="RHEA-COMP:18976"/>
        <dbReference type="ChEBI" id="CHEBI:15377"/>
        <dbReference type="ChEBI" id="CHEBI:15378"/>
        <dbReference type="ChEBI" id="CHEBI:16301"/>
        <dbReference type="ChEBI" id="CHEBI:16480"/>
        <dbReference type="ChEBI" id="CHEBI:55376"/>
        <dbReference type="ChEBI" id="CHEBI:60344"/>
    </reaction>
    <physiologicalReaction direction="right-to-left" evidence="2">
        <dbReference type="Rhea" id="RHEA:77713"/>
    </physiologicalReaction>
</comment>
<comment type="subunit">
    <text evidence="1 2">Monomer (By similarity). Homodimer and homotetramer; disulfide-linked. Mainly monomeric but also detected as part of homodimers and homotetramers (By similarity). Interacts with 14-3-3 proteins; regulates the phosphorylation of NGB. Could interact (ferrous form) with G-alpha(i) proteins (GTP-bound form) (By similarity).</text>
</comment>
<comment type="subcellular location">
    <subcellularLocation>
        <location evidence="1">Cytoplasm</location>
        <location evidence="1">Cytosol</location>
    </subcellularLocation>
    <subcellularLocation>
        <location evidence="1">Mitochondrion matrix</location>
    </subcellularLocation>
    <text evidence="1">Enriched in mitochondrial matrix upon oxygen-glucose deprivation.</text>
</comment>
<comment type="tissue specificity">
    <text evidence="4">Widely distributed throughout the adult brain, including cerebral cortex, hippocampus, thalamus, hypothalamus, olfactory bulb, and cerebellum.</text>
</comment>
<comment type="PTM">
    <text evidence="2">Phosphorylated during hypoxia by ERK1/ERK2. Phosphorylation regulates the heme pocket hexacoordination preventing the association of His-64 with the heme metal center. Thereby, promotes the access of dioxygen and nitrite to the heme and stimulates the nitrite reductase activity. Phosphorylation during hypoxia is stabilized by 14-3-3 proteins.</text>
</comment>
<comment type="similarity">
    <text evidence="3">Belongs to the globin family.</text>
</comment>
<reference key="1">
    <citation type="journal article" date="2001" name="Yi Chuan Xue Bao">
        <title>Coding region cDNA sequence cloning of rat neuroglobin gene, its polymorphism feature and tissue expression profile analysis.</title>
        <authorList>
            <person name="Zhang C.G."/>
            <person name="Li L."/>
            <person name="Deng M.Y."/>
            <person name="Xie F."/>
            <person name="Wang C.L."/>
            <person name="Zhou W.Q."/>
            <person name="Wang H.Y."/>
            <person name="He F.C."/>
        </authorList>
    </citation>
    <scope>NUCLEOTIDE SEQUENCE [MRNA]</scope>
    <source>
        <strain>Wistar</strain>
    </source>
</reference>
<reference key="2">
    <citation type="journal article" date="2002" name="Biochem. Biophys. Res. Commun.">
        <title>Full-length cDNA cloning of human neuroglobin and tissue expression of rat neuroglobin.</title>
        <authorList>
            <person name="Zhang C.G."/>
            <person name="Wang C.L."/>
            <person name="Deng M.Y."/>
            <person name="Li L."/>
            <person name="Wang H.Y."/>
            <person name="Fan M."/>
            <person name="Xu W.L."/>
            <person name="Meng F.W."/>
            <person name="Qian L."/>
            <person name="He F.C."/>
        </authorList>
    </citation>
    <scope>NUCLEOTIDE SEQUENCE [MRNA]</scope>
    <scope>TISSUE SPECIFICITY</scope>
</reference>
<reference key="3">
    <citation type="submission" date="2001-01" db="EMBL/GenBank/DDBJ databases">
        <title>Molecular cloning and sequencing of rat brain neuroglobin.</title>
        <authorList>
            <person name="Parthasarathy S.N."/>
            <person name="Parthasarathy L."/>
            <person name="Parthasarathy R."/>
        </authorList>
    </citation>
    <scope>NUCLEOTIDE SEQUENCE [MRNA]</scope>
    <source>
        <tissue>Brain</tissue>
    </source>
</reference>
<reference key="4">
    <citation type="submission" date="2001-12" db="EMBL/GenBank/DDBJ databases">
        <title>Rattus norvegicus mRNA for neuroglobin.</title>
        <authorList>
            <person name="Lee H.-M."/>
            <person name="Greeley G.H."/>
            <person name="Englander E.W."/>
        </authorList>
    </citation>
    <scope>NUCLEOTIDE SEQUENCE [MRNA]</scope>
    <source>
        <strain>Sprague-Dawley</strain>
        <tissue>Cerebellum</tissue>
    </source>
</reference>
<reference key="5">
    <citation type="submission" date="2001-03" db="EMBL/GenBank/DDBJ databases">
        <title>Rat neuroglobin (NGB) cDNA, partial sequence.</title>
        <authorList>
            <person name="Wang H."/>
            <person name="Gao X."/>
            <person name="Wang B."/>
            <person name="Huang Y."/>
            <person name="Han J."/>
        </authorList>
    </citation>
    <scope>NUCLEOTIDE SEQUENCE [MRNA] OF 8-119</scope>
</reference>
<accession>Q99JA8</accession>
<accession>Q8VH38</accession>
<accession>Q99N62</accession>
<evidence type="ECO:0000250" key="1">
    <source>
        <dbReference type="UniProtKB" id="Q9ER97"/>
    </source>
</evidence>
<evidence type="ECO:0000250" key="2">
    <source>
        <dbReference type="UniProtKB" id="Q9NPG2"/>
    </source>
</evidence>
<evidence type="ECO:0000255" key="3">
    <source>
        <dbReference type="PROSITE-ProRule" id="PRU00238"/>
    </source>
</evidence>
<evidence type="ECO:0000269" key="4">
    <source>
    </source>
</evidence>
<evidence type="ECO:0000303" key="5">
    <source>
    </source>
</evidence>
<evidence type="ECO:0000305" key="6"/>
<evidence type="ECO:0000312" key="7">
    <source>
        <dbReference type="RGD" id="621461"/>
    </source>
</evidence>
<sequence length="151" mass="16981">MERPESELIRQSWRAVSRSPLEHGTVLFSRLFALEPSLLPLFQYNGRQFSSPEDCLSSPEFLDHIRKVMLVIDAAVTNVEDLSSLEEYLATLGRKHRAVGVRLSSFSTVGESLLYMLEKCLGPDFTPATRTAWSQLYGAVVQAMSRGWDGE</sequence>
<gene>
    <name evidence="7" type="primary">Ngb</name>
</gene>
<organism>
    <name type="scientific">Rattus norvegicus</name>
    <name type="common">Rat</name>
    <dbReference type="NCBI Taxonomy" id="10116"/>
    <lineage>
        <taxon>Eukaryota</taxon>
        <taxon>Metazoa</taxon>
        <taxon>Chordata</taxon>
        <taxon>Craniata</taxon>
        <taxon>Vertebrata</taxon>
        <taxon>Euteleostomi</taxon>
        <taxon>Mammalia</taxon>
        <taxon>Eutheria</taxon>
        <taxon>Euarchontoglires</taxon>
        <taxon>Glires</taxon>
        <taxon>Rodentia</taxon>
        <taxon>Myomorpha</taxon>
        <taxon>Muroidea</taxon>
        <taxon>Muridae</taxon>
        <taxon>Murinae</taxon>
        <taxon>Rattus</taxon>
    </lineage>
</organism>
<keyword id="KW-0963">Cytoplasm</keyword>
<keyword id="KW-1015">Disulfide bond</keyword>
<keyword id="KW-0349">Heme</keyword>
<keyword id="KW-0408">Iron</keyword>
<keyword id="KW-0479">Metal-binding</keyword>
<keyword id="KW-0496">Mitochondrion</keyword>
<keyword id="KW-0560">Oxidoreductase</keyword>
<keyword id="KW-1185">Reference proteome</keyword>
<protein>
    <recommendedName>
        <fullName evidence="5">Neuroglobin</fullName>
    </recommendedName>
    <alternativeName>
        <fullName evidence="2">Nitrite reductase</fullName>
        <ecNumber evidence="2">1.7.-.-</ecNumber>
    </alternativeName>
</protein>
<dbReference type="EC" id="1.7.-.-" evidence="2"/>
<dbReference type="EMBL" id="AF333245">
    <property type="protein sequence ID" value="AAK15763.1"/>
    <property type="molecule type" value="mRNA"/>
</dbReference>
<dbReference type="EMBL" id="AF334379">
    <property type="protein sequence ID" value="AAG59898.1"/>
    <property type="molecule type" value="mRNA"/>
</dbReference>
<dbReference type="EMBL" id="AY066001">
    <property type="protein sequence ID" value="AAL47568.1"/>
    <property type="molecule type" value="mRNA"/>
</dbReference>
<dbReference type="EMBL" id="AB056655">
    <property type="protein sequence ID" value="BAB39149.1"/>
    <property type="molecule type" value="mRNA"/>
</dbReference>
<dbReference type="RefSeq" id="NP_203523.2">
    <property type="nucleotide sequence ID" value="NM_033359.3"/>
</dbReference>
<dbReference type="SMR" id="Q99JA8"/>
<dbReference type="FunCoup" id="Q99JA8">
    <property type="interactions" value="104"/>
</dbReference>
<dbReference type="STRING" id="10116.ENSRNOP00000016057"/>
<dbReference type="PaxDb" id="10116-ENSRNOP00000016057"/>
<dbReference type="GeneID" id="85382"/>
<dbReference type="KEGG" id="rno:85382"/>
<dbReference type="UCSC" id="RGD:621461">
    <property type="organism name" value="rat"/>
</dbReference>
<dbReference type="AGR" id="RGD:621461"/>
<dbReference type="CTD" id="58157"/>
<dbReference type="RGD" id="621461">
    <property type="gene designation" value="Ngb"/>
</dbReference>
<dbReference type="eggNOG" id="KOG3378">
    <property type="taxonomic scope" value="Eukaryota"/>
</dbReference>
<dbReference type="InParanoid" id="Q99JA8"/>
<dbReference type="OrthoDB" id="23203at9989"/>
<dbReference type="PhylomeDB" id="Q99JA8"/>
<dbReference type="Reactome" id="R-RNO-8981607">
    <property type="pathway name" value="Intracellular oxygen transport"/>
</dbReference>
<dbReference type="PRO" id="PR:Q99JA8"/>
<dbReference type="Proteomes" id="UP000002494">
    <property type="component" value="Unplaced"/>
</dbReference>
<dbReference type="GO" id="GO:0005829">
    <property type="term" value="C:cytosol"/>
    <property type="evidence" value="ECO:0000266"/>
    <property type="project" value="RGD"/>
</dbReference>
<dbReference type="GO" id="GO:0005759">
    <property type="term" value="C:mitochondrial matrix"/>
    <property type="evidence" value="ECO:0000266"/>
    <property type="project" value="RGD"/>
</dbReference>
<dbReference type="GO" id="GO:0043204">
    <property type="term" value="C:perikaryon"/>
    <property type="evidence" value="ECO:0000314"/>
    <property type="project" value="RGD"/>
</dbReference>
<dbReference type="GO" id="GO:0005092">
    <property type="term" value="F:GDP-dissociation inhibitor activity"/>
    <property type="evidence" value="ECO:0000250"/>
    <property type="project" value="UniProtKB"/>
</dbReference>
<dbReference type="GO" id="GO:0020037">
    <property type="term" value="F:heme binding"/>
    <property type="evidence" value="ECO:0007669"/>
    <property type="project" value="InterPro"/>
</dbReference>
<dbReference type="GO" id="GO:0046872">
    <property type="term" value="F:metal ion binding"/>
    <property type="evidence" value="ECO:0007669"/>
    <property type="project" value="UniProtKB-KW"/>
</dbReference>
<dbReference type="GO" id="GO:0098809">
    <property type="term" value="F:nitrite reductase activity"/>
    <property type="evidence" value="ECO:0000250"/>
    <property type="project" value="UniProtKB"/>
</dbReference>
<dbReference type="GO" id="GO:0019825">
    <property type="term" value="F:oxygen binding"/>
    <property type="evidence" value="ECO:0000250"/>
    <property type="project" value="UniProtKB"/>
</dbReference>
<dbReference type="GO" id="GO:0005344">
    <property type="term" value="F:oxygen carrier activity"/>
    <property type="evidence" value="ECO:0000266"/>
    <property type="project" value="RGD"/>
</dbReference>
<dbReference type="GO" id="GO:0070301">
    <property type="term" value="P:cellular response to hydrogen peroxide"/>
    <property type="evidence" value="ECO:0000315"/>
    <property type="project" value="RGD"/>
</dbReference>
<dbReference type="GO" id="GO:0071456">
    <property type="term" value="P:cellular response to hypoxia"/>
    <property type="evidence" value="ECO:0000250"/>
    <property type="project" value="UniProtKB"/>
</dbReference>
<dbReference type="GO" id="GO:0043066">
    <property type="term" value="P:negative regulation of apoptotic process"/>
    <property type="evidence" value="ECO:0000315"/>
    <property type="project" value="RGD"/>
</dbReference>
<dbReference type="GO" id="GO:0031175">
    <property type="term" value="P:neuron projection development"/>
    <property type="evidence" value="ECO:0000315"/>
    <property type="project" value="RGD"/>
</dbReference>
<dbReference type="GO" id="GO:0015671">
    <property type="term" value="P:oxygen transport"/>
    <property type="evidence" value="ECO:0000266"/>
    <property type="project" value="RGD"/>
</dbReference>
<dbReference type="GO" id="GO:0001666">
    <property type="term" value="P:response to hypoxia"/>
    <property type="evidence" value="ECO:0000270"/>
    <property type="project" value="RGD"/>
</dbReference>
<dbReference type="GO" id="GO:0010039">
    <property type="term" value="P:response to iron ion"/>
    <property type="evidence" value="ECO:0000270"/>
    <property type="project" value="RGD"/>
</dbReference>
<dbReference type="CDD" id="cd08920">
    <property type="entry name" value="Ngb"/>
    <property type="match status" value="1"/>
</dbReference>
<dbReference type="FunFam" id="1.10.490.10:FF:000006">
    <property type="entry name" value="Neuroglobin"/>
    <property type="match status" value="1"/>
</dbReference>
<dbReference type="Gene3D" id="1.10.490.10">
    <property type="entry name" value="Globins"/>
    <property type="match status" value="1"/>
</dbReference>
<dbReference type="InterPro" id="IPR000971">
    <property type="entry name" value="Globin"/>
</dbReference>
<dbReference type="InterPro" id="IPR050532">
    <property type="entry name" value="Globin-like_OT"/>
</dbReference>
<dbReference type="InterPro" id="IPR009050">
    <property type="entry name" value="Globin-like_sf"/>
</dbReference>
<dbReference type="InterPro" id="IPR012292">
    <property type="entry name" value="Globin/Proto"/>
</dbReference>
<dbReference type="PANTHER" id="PTHR46458">
    <property type="entry name" value="BLR2807 PROTEIN"/>
    <property type="match status" value="1"/>
</dbReference>
<dbReference type="PANTHER" id="PTHR46458:SF19">
    <property type="entry name" value="NEUROGLOBIN"/>
    <property type="match status" value="1"/>
</dbReference>
<dbReference type="Pfam" id="PF00042">
    <property type="entry name" value="Globin"/>
    <property type="match status" value="1"/>
</dbReference>
<dbReference type="SUPFAM" id="SSF46458">
    <property type="entry name" value="Globin-like"/>
    <property type="match status" value="1"/>
</dbReference>
<dbReference type="PROSITE" id="PS01033">
    <property type="entry name" value="GLOBIN"/>
    <property type="match status" value="1"/>
</dbReference>
<proteinExistence type="evidence at transcript level"/>